<feature type="signal peptide" evidence="2">
    <location>
        <begin position="1"/>
        <end position="22"/>
    </location>
</feature>
<feature type="propeptide" id="PRO_0000352724" evidence="2">
    <location>
        <begin position="23"/>
        <end position="26"/>
    </location>
</feature>
<feature type="chain" id="PRO_0000352725" description="Defensin-B4">
    <location>
        <begin position="29"/>
        <end position="100"/>
    </location>
</feature>
<feature type="region of interest" description="Disordered" evidence="3">
    <location>
        <begin position="60"/>
        <end position="100"/>
    </location>
</feature>
<feature type="compositionally biased region" description="Acidic residues" evidence="3">
    <location>
        <begin position="89"/>
        <end position="100"/>
    </location>
</feature>
<feature type="disulfide bond" evidence="1">
    <location>
        <begin position="29"/>
        <end position="56"/>
    </location>
</feature>
<feature type="disulfide bond" evidence="1">
    <location>
        <begin position="36"/>
        <end position="50"/>
    </location>
</feature>
<feature type="disulfide bond" evidence="1">
    <location>
        <begin position="40"/>
        <end position="57"/>
    </location>
</feature>
<proteinExistence type="evidence at transcript level"/>
<sequence length="100" mass="10757">MRASLLLFILLVYLAHAPQAQGVFGPRRCKGKLGYCRSKCQSKQVELGKCSTKAICCGISTGTSSSQGSHEVPVINSEPALESKPEPQDTQEEEATMVSE</sequence>
<evidence type="ECO:0000250" key="1"/>
<evidence type="ECO:0000255" key="2"/>
<evidence type="ECO:0000256" key="3">
    <source>
        <dbReference type="SAM" id="MobiDB-lite"/>
    </source>
</evidence>
<evidence type="ECO:0000269" key="4">
    <source>
    </source>
</evidence>
<evidence type="ECO:0000303" key="5">
    <source>
    </source>
</evidence>
<evidence type="ECO:0000303" key="6">
    <source>
    </source>
</evidence>
<evidence type="ECO:0000305" key="7"/>
<evidence type="ECO:0000305" key="8">
    <source>
    </source>
</evidence>
<evidence type="ECO:0000305" key="9">
    <source>
    </source>
</evidence>
<dbReference type="RefSeq" id="XP_007657288.1">
    <property type="nucleotide sequence ID" value="XM_007659098.3"/>
</dbReference>
<dbReference type="SMR" id="P0C8A8"/>
<dbReference type="GeneID" id="103166461"/>
<dbReference type="KEGG" id="oaa:103166461"/>
<dbReference type="InParanoid" id="P0C8A8"/>
<dbReference type="OrthoDB" id="10493073at2759"/>
<dbReference type="Proteomes" id="UP000002279">
    <property type="component" value="Unplaced"/>
</dbReference>
<dbReference type="GO" id="GO:0005576">
    <property type="term" value="C:extracellular region"/>
    <property type="evidence" value="ECO:0007669"/>
    <property type="project" value="UniProtKB-SubCell"/>
</dbReference>
<dbReference type="GO" id="GO:0042742">
    <property type="term" value="P:defense response to bacterium"/>
    <property type="evidence" value="ECO:0007669"/>
    <property type="project" value="UniProtKB-KW"/>
</dbReference>
<dbReference type="GO" id="GO:0045087">
    <property type="term" value="P:innate immune response"/>
    <property type="evidence" value="ECO:0007669"/>
    <property type="project" value="InterPro"/>
</dbReference>
<dbReference type="InterPro" id="IPR025933">
    <property type="entry name" value="Beta_defensin_dom"/>
</dbReference>
<dbReference type="Pfam" id="PF13841">
    <property type="entry name" value="Defensin_beta_2"/>
    <property type="match status" value="1"/>
</dbReference>
<comment type="function">
    <text evidence="1">Has antimicrobial activity.</text>
</comment>
<comment type="subcellular location">
    <subcellularLocation>
        <location evidence="1">Secreted</location>
    </subcellularLocation>
</comment>
<comment type="tissue specificity">
    <text evidence="4">Highly expressed in kidney, lowly expressed in spleen, and expressed at lower levels in lung.</text>
</comment>
<comment type="similarity">
    <text evidence="7">Belongs to the beta-defensin family.</text>
</comment>
<comment type="online information" name="Platypus resources">
    <link uri="https://www.twinkl.ch/search?q=platypus"/>
</comment>
<name>DEFB4_ORNAN</name>
<keyword id="KW-0044">Antibiotic</keyword>
<keyword id="KW-0929">Antimicrobial</keyword>
<keyword id="KW-0211">Defensin</keyword>
<keyword id="KW-1015">Disulfide bond</keyword>
<keyword id="KW-1185">Reference proteome</keyword>
<keyword id="KW-0964">Secreted</keyword>
<keyword id="KW-0732">Signal</keyword>
<protein>
    <recommendedName>
        <fullName evidence="8 9">Defensin-B4</fullName>
        <shortName evidence="5">DefB4</shortName>
        <shortName evidence="6">OaDefB4</shortName>
    </recommendedName>
</protein>
<reference key="1">
    <citation type="journal article" date="2008" name="Genome Res.">
        <title>Defensins and the convergent evolution of platypus and reptile venom genes.</title>
        <authorList>
            <person name="Whittington C.M."/>
            <person name="Papenfuss A.T."/>
            <person name="Bansal P."/>
            <person name="Torres A.M."/>
            <person name="Wong E.S."/>
            <person name="Deakin J.E."/>
            <person name="Graves T."/>
            <person name="Alsop A."/>
            <person name="Schatzkamer K."/>
            <person name="Kremitzki C."/>
            <person name="Ponting C.P."/>
            <person name="Temple-Smith P."/>
            <person name="Warren W.C."/>
            <person name="Kuchel P.W."/>
            <person name="Belov K."/>
        </authorList>
    </citation>
    <scope>NUCLEOTIDE SEQUENCE [MRNA]</scope>
</reference>
<reference key="2">
    <citation type="journal article" date="2008" name="Toxicon">
        <title>Expression patterns of platypus defensin and related venom genes across a range of tissue types reveal the possibility of broader functions for OvDLPs than previously suspected.</title>
        <authorList>
            <person name="Whittington C.M."/>
            <person name="Papenfuss A.T."/>
            <person name="Kuchel P.W."/>
            <person name="Belov K."/>
        </authorList>
    </citation>
    <scope>TISSUE SPECIFICITY</scope>
</reference>
<accession>P0C8A8</accession>
<organism>
    <name type="scientific">Ornithorhynchus anatinus</name>
    <name type="common">Duckbill platypus</name>
    <dbReference type="NCBI Taxonomy" id="9258"/>
    <lineage>
        <taxon>Eukaryota</taxon>
        <taxon>Metazoa</taxon>
        <taxon>Chordata</taxon>
        <taxon>Craniata</taxon>
        <taxon>Vertebrata</taxon>
        <taxon>Euteleostomi</taxon>
        <taxon>Mammalia</taxon>
        <taxon>Monotremata</taxon>
        <taxon>Ornithorhynchidae</taxon>
        <taxon>Ornithorhynchus</taxon>
    </lineage>
</organism>